<protein>
    <recommendedName>
        <fullName evidence="1">6-carboxyhexanoate--CoA ligase</fullName>
        <ecNumber evidence="1">6.2.1.14</ecNumber>
    </recommendedName>
    <alternativeName>
        <fullName evidence="1">Pimeloyl-CoA synthase</fullName>
    </alternativeName>
</protein>
<keyword id="KW-0067">ATP-binding</keyword>
<keyword id="KW-0093">Biotin biosynthesis</keyword>
<keyword id="KW-0436">Ligase</keyword>
<keyword id="KW-0460">Magnesium</keyword>
<keyword id="KW-0547">Nucleotide-binding</keyword>
<keyword id="KW-1185">Reference proteome</keyword>
<organism>
    <name type="scientific">Sulfurihydrogenibium azorense (strain DSM 15241 / OCM 825 / Az-Fu1)</name>
    <dbReference type="NCBI Taxonomy" id="204536"/>
    <lineage>
        <taxon>Bacteria</taxon>
        <taxon>Pseudomonadati</taxon>
        <taxon>Aquificota</taxon>
        <taxon>Aquificia</taxon>
        <taxon>Aquificales</taxon>
        <taxon>Hydrogenothermaceae</taxon>
        <taxon>Sulfurihydrogenibium</taxon>
    </lineage>
</organism>
<dbReference type="EC" id="6.2.1.14" evidence="1"/>
<dbReference type="EMBL" id="CP001229">
    <property type="protein sequence ID" value="ACN98309.1"/>
    <property type="molecule type" value="Genomic_DNA"/>
</dbReference>
<dbReference type="RefSeq" id="WP_012673634.1">
    <property type="nucleotide sequence ID" value="NC_012438.1"/>
</dbReference>
<dbReference type="SMR" id="C1DW75"/>
<dbReference type="STRING" id="204536.SULAZ_1395"/>
<dbReference type="KEGG" id="saf:SULAZ_1395"/>
<dbReference type="eggNOG" id="COG1424">
    <property type="taxonomic scope" value="Bacteria"/>
</dbReference>
<dbReference type="HOGENOM" id="CLU_076858_0_0_0"/>
<dbReference type="OrthoDB" id="9792985at2"/>
<dbReference type="UniPathway" id="UPA00999">
    <property type="reaction ID" value="UER00351"/>
</dbReference>
<dbReference type="Proteomes" id="UP000001369">
    <property type="component" value="Chromosome"/>
</dbReference>
<dbReference type="GO" id="GO:0042410">
    <property type="term" value="F:6-carboxyhexanoate-CoA ligase activity"/>
    <property type="evidence" value="ECO:0007669"/>
    <property type="project" value="UniProtKB-UniRule"/>
</dbReference>
<dbReference type="GO" id="GO:0005524">
    <property type="term" value="F:ATP binding"/>
    <property type="evidence" value="ECO:0007669"/>
    <property type="project" value="UniProtKB-KW"/>
</dbReference>
<dbReference type="GO" id="GO:0000287">
    <property type="term" value="F:magnesium ion binding"/>
    <property type="evidence" value="ECO:0007669"/>
    <property type="project" value="UniProtKB-UniRule"/>
</dbReference>
<dbReference type="GO" id="GO:0009102">
    <property type="term" value="P:biotin biosynthetic process"/>
    <property type="evidence" value="ECO:0007669"/>
    <property type="project" value="UniProtKB-UniRule"/>
</dbReference>
<dbReference type="HAMAP" id="MF_00668">
    <property type="entry name" value="BioW"/>
    <property type="match status" value="1"/>
</dbReference>
<dbReference type="InterPro" id="IPR005499">
    <property type="entry name" value="BioW"/>
</dbReference>
<dbReference type="NCBIfam" id="TIGR01204">
    <property type="entry name" value="bioW"/>
    <property type="match status" value="1"/>
</dbReference>
<dbReference type="NCBIfam" id="NF002360">
    <property type="entry name" value="PRK01322.1"/>
    <property type="match status" value="1"/>
</dbReference>
<dbReference type="Pfam" id="PF03744">
    <property type="entry name" value="BioW"/>
    <property type="match status" value="1"/>
</dbReference>
<accession>C1DW75</accession>
<evidence type="ECO:0000255" key="1">
    <source>
        <dbReference type="HAMAP-Rule" id="MF_00668"/>
    </source>
</evidence>
<reference key="1">
    <citation type="journal article" date="2009" name="J. Bacteriol.">
        <title>Complete and draft genome sequences of six members of the Aquificales.</title>
        <authorList>
            <person name="Reysenbach A.-L."/>
            <person name="Hamamura N."/>
            <person name="Podar M."/>
            <person name="Griffiths E."/>
            <person name="Ferreira S."/>
            <person name="Hochstein R."/>
            <person name="Heidelberg J."/>
            <person name="Johnson J."/>
            <person name="Mead D."/>
            <person name="Pohorille A."/>
            <person name="Sarmiento M."/>
            <person name="Schweighofer K."/>
            <person name="Seshadri R."/>
            <person name="Voytek M.A."/>
        </authorList>
    </citation>
    <scope>NUCLEOTIDE SEQUENCE [LARGE SCALE GENOMIC DNA]</scope>
    <source>
        <strain>DSM 15241 / OCM 825 / Az-Fu1</strain>
    </source>
</reference>
<sequence length="245" mass="27940">MKEYFSVKMRASLQGRHVSGAERIVLKEDLPTVISQLSQRPKEYDSLNIKVEKINDLNYIEKSLNVKTINVKDWIEGNKVAVEILQNQGVDKKIAEKYINLIHQGAVNGENMRGAMIVNLSGERVEKDKTRGIRTVNIDFEDRKAITELLKEKGYTERTVDALALATKTLNHPDIVAEYCISDDPSYTTGYVATKTTYYRINPLKQLSNEKGGRIYFVKDTANIEDIYQYLESEAFLIKQLGDLQ</sequence>
<gene>
    <name evidence="1" type="primary">bioW</name>
    <name type="ordered locus">SULAZ_1395</name>
</gene>
<proteinExistence type="inferred from homology"/>
<feature type="chain" id="PRO_0000412089" description="6-carboxyhexanoate--CoA ligase">
    <location>
        <begin position="1"/>
        <end position="245"/>
    </location>
</feature>
<name>BIOW_SULAA</name>
<comment type="function">
    <text evidence="1">Catalyzes the transformation of pimelate into pimeloyl-CoA with concomitant hydrolysis of ATP to AMP.</text>
</comment>
<comment type="catalytic activity">
    <reaction evidence="1">
        <text>heptanedioate + ATP + CoA = 6-carboxyhexanoyl-CoA + AMP + diphosphate</text>
        <dbReference type="Rhea" id="RHEA:14781"/>
        <dbReference type="ChEBI" id="CHEBI:30616"/>
        <dbReference type="ChEBI" id="CHEBI:33019"/>
        <dbReference type="ChEBI" id="CHEBI:36165"/>
        <dbReference type="ChEBI" id="CHEBI:57287"/>
        <dbReference type="ChEBI" id="CHEBI:57360"/>
        <dbReference type="ChEBI" id="CHEBI:456215"/>
        <dbReference type="EC" id="6.2.1.14"/>
    </reaction>
</comment>
<comment type="cofactor">
    <cofactor evidence="1">
        <name>Mg(2+)</name>
        <dbReference type="ChEBI" id="CHEBI:18420"/>
    </cofactor>
</comment>
<comment type="pathway">
    <text evidence="1">Metabolic intermediate metabolism; pimeloyl-CoA biosynthesis; pimeloyl-CoA from pimelate: step 1/1.</text>
</comment>
<comment type="subunit">
    <text evidence="1">Homodimer.</text>
</comment>
<comment type="similarity">
    <text evidence="1">Belongs to the BioW family.</text>
</comment>